<dbReference type="EMBL" id="CU928160">
    <property type="protein sequence ID" value="CAQ97153.1"/>
    <property type="molecule type" value="Genomic_DNA"/>
</dbReference>
<dbReference type="RefSeq" id="WP_000174677.1">
    <property type="nucleotide sequence ID" value="NC_011741.1"/>
</dbReference>
<dbReference type="SMR" id="B7M269"/>
<dbReference type="GeneID" id="93777153"/>
<dbReference type="KEGG" id="ecr:ECIAI1_0279"/>
<dbReference type="HOGENOM" id="CLU_136773_0_0_6"/>
<dbReference type="GO" id="GO:0005737">
    <property type="term" value="C:cytoplasm"/>
    <property type="evidence" value="ECO:0007669"/>
    <property type="project" value="UniProtKB-SubCell"/>
</dbReference>
<dbReference type="GO" id="GO:0045893">
    <property type="term" value="P:positive regulation of DNA-templated transcription"/>
    <property type="evidence" value="ECO:0007669"/>
    <property type="project" value="UniProtKB-UniRule"/>
</dbReference>
<dbReference type="FunFam" id="3.30.310.230:FF:000001">
    <property type="entry name" value="Sigma factor-binding protein Crl"/>
    <property type="match status" value="1"/>
</dbReference>
<dbReference type="Gene3D" id="3.30.310.230">
    <property type="entry name" value="Sigma factor-binding protein Crl monomer"/>
    <property type="match status" value="1"/>
</dbReference>
<dbReference type="HAMAP" id="MF_01178">
    <property type="entry name" value="Crl"/>
    <property type="match status" value="1"/>
</dbReference>
<dbReference type="InterPro" id="IPR009986">
    <property type="entry name" value="Tscrpt_reg_Crl"/>
</dbReference>
<dbReference type="InterPro" id="IPR038208">
    <property type="entry name" value="Tscrpt_reg_Crl_sf"/>
</dbReference>
<dbReference type="NCBIfam" id="NF008217">
    <property type="entry name" value="PRK10984.1"/>
    <property type="match status" value="1"/>
</dbReference>
<dbReference type="Pfam" id="PF07417">
    <property type="entry name" value="Crl"/>
    <property type="match status" value="1"/>
</dbReference>
<protein>
    <recommendedName>
        <fullName evidence="1">Sigma factor-binding protein Crl</fullName>
    </recommendedName>
</protein>
<name>CRL_ECO8A</name>
<evidence type="ECO:0000255" key="1">
    <source>
        <dbReference type="HAMAP-Rule" id="MF_01178"/>
    </source>
</evidence>
<proteinExistence type="inferred from homology"/>
<feature type="chain" id="PRO_1000138137" description="Sigma factor-binding protein Crl">
    <location>
        <begin position="1"/>
        <end position="133"/>
    </location>
</feature>
<feature type="region of interest" description="Essential for activity" evidence="1">
    <location>
        <begin position="99"/>
        <end position="122"/>
    </location>
</feature>
<feature type="coiled-coil region" evidence="1">
    <location>
        <begin position="90"/>
        <end position="116"/>
    </location>
</feature>
<keyword id="KW-0010">Activator</keyword>
<keyword id="KW-0175">Coiled coil</keyword>
<keyword id="KW-0963">Cytoplasm</keyword>
<keyword id="KW-0804">Transcription</keyword>
<keyword id="KW-0805">Transcription regulation</keyword>
<comment type="function">
    <text evidence="1">Binds to the sigma-S subunit of RNA polymerase, activating expression of sigma-S-regulated genes. Stimulates RNA polymerase holoenzyme formation and may bind to several other sigma factors, such as sigma-70 and sigma-32.</text>
</comment>
<comment type="subcellular location">
    <subcellularLocation>
        <location evidence="1">Cytoplasm</location>
    </subcellularLocation>
</comment>
<comment type="similarity">
    <text evidence="1">Belongs to the Crl family.</text>
</comment>
<accession>B7M269</accession>
<reference key="1">
    <citation type="journal article" date="2009" name="PLoS Genet.">
        <title>Organised genome dynamics in the Escherichia coli species results in highly diverse adaptive paths.</title>
        <authorList>
            <person name="Touchon M."/>
            <person name="Hoede C."/>
            <person name="Tenaillon O."/>
            <person name="Barbe V."/>
            <person name="Baeriswyl S."/>
            <person name="Bidet P."/>
            <person name="Bingen E."/>
            <person name="Bonacorsi S."/>
            <person name="Bouchier C."/>
            <person name="Bouvet O."/>
            <person name="Calteau A."/>
            <person name="Chiapello H."/>
            <person name="Clermont O."/>
            <person name="Cruveiller S."/>
            <person name="Danchin A."/>
            <person name="Diard M."/>
            <person name="Dossat C."/>
            <person name="Karoui M.E."/>
            <person name="Frapy E."/>
            <person name="Garry L."/>
            <person name="Ghigo J.M."/>
            <person name="Gilles A.M."/>
            <person name="Johnson J."/>
            <person name="Le Bouguenec C."/>
            <person name="Lescat M."/>
            <person name="Mangenot S."/>
            <person name="Martinez-Jehanne V."/>
            <person name="Matic I."/>
            <person name="Nassif X."/>
            <person name="Oztas S."/>
            <person name="Petit M.A."/>
            <person name="Pichon C."/>
            <person name="Rouy Z."/>
            <person name="Ruf C.S."/>
            <person name="Schneider D."/>
            <person name="Tourret J."/>
            <person name="Vacherie B."/>
            <person name="Vallenet D."/>
            <person name="Medigue C."/>
            <person name="Rocha E.P.C."/>
            <person name="Denamur E."/>
        </authorList>
    </citation>
    <scope>NUCLEOTIDE SEQUENCE [LARGE SCALE GENOMIC DNA]</scope>
    <source>
        <strain>IAI1</strain>
    </source>
</reference>
<sequence length="133" mass="15656">MTLPSGHPKSRLIKKFTALGPYIREGKCEDNRFFFDCLAVCVNVKPAPEVREFWGWWMELEAQESRFTYSYQFGLFDKAGDWKSVPVKDTEVVERLEHTLREFHEKLRELLTTLNLKLEPADDFRDEPVKLTA</sequence>
<gene>
    <name evidence="1" type="primary">crl</name>
    <name type="ordered locus">ECIAI1_0279</name>
</gene>
<organism>
    <name type="scientific">Escherichia coli O8 (strain IAI1)</name>
    <dbReference type="NCBI Taxonomy" id="585034"/>
    <lineage>
        <taxon>Bacteria</taxon>
        <taxon>Pseudomonadati</taxon>
        <taxon>Pseudomonadota</taxon>
        <taxon>Gammaproteobacteria</taxon>
        <taxon>Enterobacterales</taxon>
        <taxon>Enterobacteriaceae</taxon>
        <taxon>Escherichia</taxon>
    </lineage>
</organism>